<protein>
    <recommendedName>
        <fullName evidence="1">Bifunctional glutamine synthetase adenylyltransferase/adenylyl-removing enzyme</fullName>
    </recommendedName>
    <alternativeName>
        <fullName evidence="1">ATP:glutamine synthetase adenylyltransferase</fullName>
    </alternativeName>
    <alternativeName>
        <fullName evidence="1">ATase</fullName>
    </alternativeName>
    <domain>
        <recommendedName>
            <fullName evidence="1">Glutamine synthetase adenylyl-L-tyrosine phosphorylase</fullName>
            <ecNumber evidence="1">2.7.7.89</ecNumber>
        </recommendedName>
        <alternativeName>
            <fullName evidence="1">Adenylyl removase</fullName>
            <shortName evidence="1">AR</shortName>
            <shortName evidence="1">AT-N</shortName>
        </alternativeName>
    </domain>
    <domain>
        <recommendedName>
            <fullName evidence="1">Glutamine synthetase adenylyl transferase</fullName>
            <ecNumber evidence="1">2.7.7.42</ecNumber>
        </recommendedName>
        <alternativeName>
            <fullName evidence="1">Adenylyl transferase</fullName>
            <shortName evidence="1">AT</shortName>
            <shortName evidence="1">AT-C</shortName>
        </alternativeName>
    </domain>
</protein>
<proteinExistence type="inferred from homology"/>
<name>GLNE_XANCB</name>
<accession>B0RN79</accession>
<gene>
    <name evidence="1" type="primary">glnE</name>
    <name type="ordered locus">xcc-b100_0579</name>
</gene>
<comment type="function">
    <text evidence="1">Involved in the regulation of glutamine synthetase GlnA, a key enzyme in the process to assimilate ammonia. When cellular nitrogen levels are high, the C-terminal adenylyl transferase (AT) inactivates GlnA by covalent transfer of an adenylyl group from ATP to specific tyrosine residue of GlnA, thus reducing its activity. Conversely, when nitrogen levels are low, the N-terminal adenylyl removase (AR) activates GlnA by removing the adenylyl group by phosphorolysis, increasing its activity. The regulatory region of GlnE binds the signal transduction protein PII (GlnB) which indicates the nitrogen status of the cell.</text>
</comment>
<comment type="catalytic activity">
    <reaction evidence="1">
        <text>[glutamine synthetase]-O(4)-(5'-adenylyl)-L-tyrosine + phosphate = [glutamine synthetase]-L-tyrosine + ADP</text>
        <dbReference type="Rhea" id="RHEA:43716"/>
        <dbReference type="Rhea" id="RHEA-COMP:10660"/>
        <dbReference type="Rhea" id="RHEA-COMP:10661"/>
        <dbReference type="ChEBI" id="CHEBI:43474"/>
        <dbReference type="ChEBI" id="CHEBI:46858"/>
        <dbReference type="ChEBI" id="CHEBI:83624"/>
        <dbReference type="ChEBI" id="CHEBI:456216"/>
        <dbReference type="EC" id="2.7.7.89"/>
    </reaction>
</comment>
<comment type="catalytic activity">
    <reaction evidence="1">
        <text>[glutamine synthetase]-L-tyrosine + ATP = [glutamine synthetase]-O(4)-(5'-adenylyl)-L-tyrosine + diphosphate</text>
        <dbReference type="Rhea" id="RHEA:18589"/>
        <dbReference type="Rhea" id="RHEA-COMP:10660"/>
        <dbReference type="Rhea" id="RHEA-COMP:10661"/>
        <dbReference type="ChEBI" id="CHEBI:30616"/>
        <dbReference type="ChEBI" id="CHEBI:33019"/>
        <dbReference type="ChEBI" id="CHEBI:46858"/>
        <dbReference type="ChEBI" id="CHEBI:83624"/>
        <dbReference type="EC" id="2.7.7.42"/>
    </reaction>
</comment>
<comment type="cofactor">
    <cofactor evidence="1">
        <name>Mg(2+)</name>
        <dbReference type="ChEBI" id="CHEBI:18420"/>
    </cofactor>
</comment>
<comment type="similarity">
    <text evidence="1">Belongs to the GlnE family.</text>
</comment>
<dbReference type="EC" id="2.7.7.89" evidence="1"/>
<dbReference type="EC" id="2.7.7.42" evidence="1"/>
<dbReference type="EMBL" id="AM920689">
    <property type="protein sequence ID" value="CAP49914.1"/>
    <property type="molecule type" value="Genomic_DNA"/>
</dbReference>
<dbReference type="SMR" id="B0RN79"/>
<dbReference type="KEGG" id="xca:xcc-b100_0579"/>
<dbReference type="HOGENOM" id="CLU_006233_0_1_6"/>
<dbReference type="Proteomes" id="UP000001188">
    <property type="component" value="Chromosome"/>
</dbReference>
<dbReference type="GO" id="GO:0005829">
    <property type="term" value="C:cytosol"/>
    <property type="evidence" value="ECO:0007669"/>
    <property type="project" value="TreeGrafter"/>
</dbReference>
<dbReference type="GO" id="GO:0008882">
    <property type="term" value="F:[glutamate-ammonia-ligase] adenylyltransferase activity"/>
    <property type="evidence" value="ECO:0007669"/>
    <property type="project" value="UniProtKB-UniRule"/>
</dbReference>
<dbReference type="GO" id="GO:0047388">
    <property type="term" value="F:[glutamine synthetase]-adenylyl-L-tyrosine phosphorylase activity"/>
    <property type="evidence" value="ECO:0007669"/>
    <property type="project" value="UniProtKB-EC"/>
</dbReference>
<dbReference type="GO" id="GO:0005524">
    <property type="term" value="F:ATP binding"/>
    <property type="evidence" value="ECO:0007669"/>
    <property type="project" value="UniProtKB-UniRule"/>
</dbReference>
<dbReference type="GO" id="GO:0000287">
    <property type="term" value="F:magnesium ion binding"/>
    <property type="evidence" value="ECO:0007669"/>
    <property type="project" value="UniProtKB-UniRule"/>
</dbReference>
<dbReference type="GO" id="GO:0000820">
    <property type="term" value="P:regulation of glutamine family amino acid metabolic process"/>
    <property type="evidence" value="ECO:0007669"/>
    <property type="project" value="UniProtKB-UniRule"/>
</dbReference>
<dbReference type="CDD" id="cd05401">
    <property type="entry name" value="NT_GlnE_GlnD_like"/>
    <property type="match status" value="2"/>
</dbReference>
<dbReference type="FunFam" id="1.20.120.330:FF:000005">
    <property type="entry name" value="Bifunctional glutamine synthetase adenylyltransferase/adenylyl-removing enzyme"/>
    <property type="match status" value="1"/>
</dbReference>
<dbReference type="FunFam" id="3.30.460.10:FF:000009">
    <property type="entry name" value="Bifunctional glutamine synthetase adenylyltransferase/adenylyl-removing enzyme"/>
    <property type="match status" value="2"/>
</dbReference>
<dbReference type="Gene3D" id="1.20.120.1510">
    <property type="match status" value="1"/>
</dbReference>
<dbReference type="Gene3D" id="3.30.460.10">
    <property type="entry name" value="Beta Polymerase, domain 2"/>
    <property type="match status" value="2"/>
</dbReference>
<dbReference type="Gene3D" id="1.20.120.330">
    <property type="entry name" value="Nucleotidyltransferases domain 2"/>
    <property type="match status" value="2"/>
</dbReference>
<dbReference type="HAMAP" id="MF_00802">
    <property type="entry name" value="GlnE"/>
    <property type="match status" value="1"/>
</dbReference>
<dbReference type="InterPro" id="IPR023057">
    <property type="entry name" value="GlnE"/>
</dbReference>
<dbReference type="InterPro" id="IPR005190">
    <property type="entry name" value="GlnE_rpt_dom"/>
</dbReference>
<dbReference type="InterPro" id="IPR043519">
    <property type="entry name" value="NT_sf"/>
</dbReference>
<dbReference type="InterPro" id="IPR013546">
    <property type="entry name" value="PII_UdlTrfase/GS_AdlTrfase"/>
</dbReference>
<dbReference type="NCBIfam" id="NF008292">
    <property type="entry name" value="PRK11072.1"/>
    <property type="match status" value="1"/>
</dbReference>
<dbReference type="PANTHER" id="PTHR30621:SF0">
    <property type="entry name" value="BIFUNCTIONAL GLUTAMINE SYNTHETASE ADENYLYLTRANSFERASE_ADENYLYL-REMOVING ENZYME"/>
    <property type="match status" value="1"/>
</dbReference>
<dbReference type="PANTHER" id="PTHR30621">
    <property type="entry name" value="GLUTAMINE SYNTHETASE ADENYLYLTRANSFERASE"/>
    <property type="match status" value="1"/>
</dbReference>
<dbReference type="Pfam" id="PF08335">
    <property type="entry name" value="GlnD_UR_UTase"/>
    <property type="match status" value="2"/>
</dbReference>
<dbReference type="Pfam" id="PF03710">
    <property type="entry name" value="GlnE"/>
    <property type="match status" value="2"/>
</dbReference>
<dbReference type="SUPFAM" id="SSF81301">
    <property type="entry name" value="Nucleotidyltransferase"/>
    <property type="match status" value="2"/>
</dbReference>
<dbReference type="SUPFAM" id="SSF81593">
    <property type="entry name" value="Nucleotidyltransferase substrate binding subunit/domain"/>
    <property type="match status" value="2"/>
</dbReference>
<evidence type="ECO:0000255" key="1">
    <source>
        <dbReference type="HAMAP-Rule" id="MF_00802"/>
    </source>
</evidence>
<feature type="chain" id="PRO_1000133926" description="Bifunctional glutamine synthetase adenylyltransferase/adenylyl-removing enzyme">
    <location>
        <begin position="1"/>
        <end position="937"/>
    </location>
</feature>
<feature type="region of interest" description="Adenylyl removase" evidence="1">
    <location>
        <begin position="1"/>
        <end position="436"/>
    </location>
</feature>
<feature type="region of interest" description="Adenylyl transferase" evidence="1">
    <location>
        <begin position="443"/>
        <end position="937"/>
    </location>
</feature>
<organism>
    <name type="scientific">Xanthomonas campestris pv. campestris (strain B100)</name>
    <dbReference type="NCBI Taxonomy" id="509169"/>
    <lineage>
        <taxon>Bacteria</taxon>
        <taxon>Pseudomonadati</taxon>
        <taxon>Pseudomonadota</taxon>
        <taxon>Gammaproteobacteria</taxon>
        <taxon>Lysobacterales</taxon>
        <taxon>Lysobacteraceae</taxon>
        <taxon>Xanthomonas</taxon>
    </lineage>
</organism>
<keyword id="KW-0067">ATP-binding</keyword>
<keyword id="KW-0460">Magnesium</keyword>
<keyword id="KW-0511">Multifunctional enzyme</keyword>
<keyword id="KW-0547">Nucleotide-binding</keyword>
<keyword id="KW-0548">Nucleotidyltransferase</keyword>
<keyword id="KW-0808">Transferase</keyword>
<sequence>MSQPIPSASPALAALIERAVARVRHALPADAPWPEGLEHPLARVALASDFVVDTLARQPALLAHLAQPDPPPLPVPRLDPAQPQEWAAQLRRYRAAASARLVWRDVLGLDDVDATLAGATMLAETCLQCALQALEQQFATRHGQVIAEDGSVQRLVVFGLGKLGGGELNFSSDVDLVYAYPQAGQSDGARPLAAEEYFARLGQQLAKLLDETTADGFSHRVDLRLRPFGSAGRVALSFNGMDQYFQREGRDWERYAWLKARPVAGDIAAGEAWLETLRPFVYRRYLDFTALDGLRDMKAAITAEVARHARLDDIKRGPGGIREIEFLVQSLQLIRGGREASLRERRLLPALQALVDLGQIDPPTGQALAEAYRFLRRVENRLQMLRDAQTHALPQGEPERERIALGLGYAHWQALLEALAPHRTRVAAEFAELLAPRVHATAPDTLADYWRALPEGDAAPLLGIGLHDPNNAHHMLADFAQSSGVRALSDGARTRLDRVMPALLHAAIRATQPDAALRRVLGLLQATLRRTSYLALLDEQPSALARLVDVLSRSALLAERLAAYPLLLDELLDTRISGPLPDRAALHTACVDTLQIDDTEAALRELNERRLALSFRIALATLDGRQQPVDSTQQLAWLAEAVVQTVLQLAQTQLQAAHGQVPGGAFAIIGYGSLGGMELGFGSDLDLVFLYDHPREVEASDGKRPLEAGRWFARLAQKVMTLLGAETGAGRLYDIDVRLRPDGGKGALVSSLASYRDYQRDRAWTWEHQALVRARAVAGDAALCEAFVQVRRETLTRVRDPALLHEDVRKMRARMRSELDRSDAGRLDLKQGAGGLVDLEFLLQAGVLGQAAQHPALLLACATPALIDALVQVQWLPAESAAPLHHAHATLVEAGLSCTLDRRPRLVVSTPPIRDACQIVAAIADAQQLRFQPGKGA</sequence>
<reference key="1">
    <citation type="journal article" date="2008" name="J. Biotechnol.">
        <title>The genome of Xanthomonas campestris pv. campestris B100 and its use for the reconstruction of metabolic pathways involved in xanthan biosynthesis.</title>
        <authorList>
            <person name="Vorhoelter F.-J."/>
            <person name="Schneiker S."/>
            <person name="Goesmann A."/>
            <person name="Krause L."/>
            <person name="Bekel T."/>
            <person name="Kaiser O."/>
            <person name="Linke B."/>
            <person name="Patschkowski T."/>
            <person name="Rueckert C."/>
            <person name="Schmid J."/>
            <person name="Sidhu V.K."/>
            <person name="Sieber V."/>
            <person name="Tauch A."/>
            <person name="Watt S.A."/>
            <person name="Weisshaar B."/>
            <person name="Becker A."/>
            <person name="Niehaus K."/>
            <person name="Puehler A."/>
        </authorList>
    </citation>
    <scope>NUCLEOTIDE SEQUENCE [LARGE SCALE GENOMIC DNA]</scope>
    <source>
        <strain>B100</strain>
    </source>
</reference>